<dbReference type="EC" id="7.2.2.11" evidence="1"/>
<dbReference type="EMBL" id="CP000247">
    <property type="protein sequence ID" value="ABG71551.1"/>
    <property type="molecule type" value="Genomic_DNA"/>
</dbReference>
<dbReference type="RefSeq" id="WP_000173679.1">
    <property type="nucleotide sequence ID" value="NC_008253.1"/>
</dbReference>
<dbReference type="SMR" id="Q0TBX8"/>
<dbReference type="KEGG" id="ecp:ECP_3575"/>
<dbReference type="HOGENOM" id="CLU_000604_1_23_6"/>
<dbReference type="Proteomes" id="UP000009182">
    <property type="component" value="Chromosome"/>
</dbReference>
<dbReference type="GO" id="GO:0005886">
    <property type="term" value="C:plasma membrane"/>
    <property type="evidence" value="ECO:0007669"/>
    <property type="project" value="UniProtKB-SubCell"/>
</dbReference>
<dbReference type="GO" id="GO:0015413">
    <property type="term" value="F:ABC-type nickel transporter activity"/>
    <property type="evidence" value="ECO:0007669"/>
    <property type="project" value="UniProtKB-EC"/>
</dbReference>
<dbReference type="GO" id="GO:0005524">
    <property type="term" value="F:ATP binding"/>
    <property type="evidence" value="ECO:0007669"/>
    <property type="project" value="UniProtKB-KW"/>
</dbReference>
<dbReference type="GO" id="GO:0016887">
    <property type="term" value="F:ATP hydrolysis activity"/>
    <property type="evidence" value="ECO:0007669"/>
    <property type="project" value="InterPro"/>
</dbReference>
<dbReference type="GO" id="GO:0016151">
    <property type="term" value="F:nickel cation binding"/>
    <property type="evidence" value="ECO:0007669"/>
    <property type="project" value="InterPro"/>
</dbReference>
<dbReference type="CDD" id="cd03257">
    <property type="entry name" value="ABC_NikE_OppD_transporters"/>
    <property type="match status" value="1"/>
</dbReference>
<dbReference type="FunFam" id="3.40.50.300:FF:001020">
    <property type="entry name" value="Nickel import ATP-binding protein NikE"/>
    <property type="match status" value="1"/>
</dbReference>
<dbReference type="Gene3D" id="3.40.50.300">
    <property type="entry name" value="P-loop containing nucleotide triphosphate hydrolases"/>
    <property type="match status" value="1"/>
</dbReference>
<dbReference type="InterPro" id="IPR003593">
    <property type="entry name" value="AAA+_ATPase"/>
</dbReference>
<dbReference type="InterPro" id="IPR050319">
    <property type="entry name" value="ABC_transp_ATP-bind"/>
</dbReference>
<dbReference type="InterPro" id="IPR003439">
    <property type="entry name" value="ABC_transporter-like_ATP-bd"/>
</dbReference>
<dbReference type="InterPro" id="IPR017871">
    <property type="entry name" value="ABC_transporter-like_CS"/>
</dbReference>
<dbReference type="InterPro" id="IPR014137">
    <property type="entry name" value="Nickel_NikE"/>
</dbReference>
<dbReference type="InterPro" id="IPR027417">
    <property type="entry name" value="P-loop_NTPase"/>
</dbReference>
<dbReference type="NCBIfam" id="TIGR02769">
    <property type="entry name" value="nickel_nikE"/>
    <property type="match status" value="1"/>
</dbReference>
<dbReference type="NCBIfam" id="NF007739">
    <property type="entry name" value="PRK10419.1"/>
    <property type="match status" value="1"/>
</dbReference>
<dbReference type="PANTHER" id="PTHR43776:SF7">
    <property type="entry name" value="D,D-DIPEPTIDE TRANSPORT ATP-BINDING PROTEIN DDPF-RELATED"/>
    <property type="match status" value="1"/>
</dbReference>
<dbReference type="PANTHER" id="PTHR43776">
    <property type="entry name" value="TRANSPORT ATP-BINDING PROTEIN"/>
    <property type="match status" value="1"/>
</dbReference>
<dbReference type="Pfam" id="PF00005">
    <property type="entry name" value="ABC_tran"/>
    <property type="match status" value="1"/>
</dbReference>
<dbReference type="SMART" id="SM00382">
    <property type="entry name" value="AAA"/>
    <property type="match status" value="1"/>
</dbReference>
<dbReference type="SUPFAM" id="SSF52540">
    <property type="entry name" value="P-loop containing nucleoside triphosphate hydrolases"/>
    <property type="match status" value="1"/>
</dbReference>
<dbReference type="PROSITE" id="PS00211">
    <property type="entry name" value="ABC_TRANSPORTER_1"/>
    <property type="match status" value="1"/>
</dbReference>
<dbReference type="PROSITE" id="PS50893">
    <property type="entry name" value="ABC_TRANSPORTER_2"/>
    <property type="match status" value="1"/>
</dbReference>
<dbReference type="PROSITE" id="PS51248">
    <property type="entry name" value="NIKE"/>
    <property type="match status" value="1"/>
</dbReference>
<keyword id="KW-0067">ATP-binding</keyword>
<keyword id="KW-0997">Cell inner membrane</keyword>
<keyword id="KW-1003">Cell membrane</keyword>
<keyword id="KW-0406">Ion transport</keyword>
<keyword id="KW-0472">Membrane</keyword>
<keyword id="KW-0533">Nickel</keyword>
<keyword id="KW-0921">Nickel transport</keyword>
<keyword id="KW-0547">Nucleotide-binding</keyword>
<keyword id="KW-1278">Translocase</keyword>
<keyword id="KW-0813">Transport</keyword>
<gene>
    <name evidence="1" type="primary">nikE</name>
    <name type="ordered locus">ECP_3575</name>
</gene>
<reference key="1">
    <citation type="journal article" date="2006" name="Mol. Microbiol.">
        <title>Role of pathogenicity island-associated integrases in the genome plasticity of uropathogenic Escherichia coli strain 536.</title>
        <authorList>
            <person name="Hochhut B."/>
            <person name="Wilde C."/>
            <person name="Balling G."/>
            <person name="Middendorf B."/>
            <person name="Dobrindt U."/>
            <person name="Brzuszkiewicz E."/>
            <person name="Gottschalk G."/>
            <person name="Carniel E."/>
            <person name="Hacker J."/>
        </authorList>
    </citation>
    <scope>NUCLEOTIDE SEQUENCE [LARGE SCALE GENOMIC DNA]</scope>
    <source>
        <strain>536 / UPEC</strain>
    </source>
</reference>
<organism>
    <name type="scientific">Escherichia coli O6:K15:H31 (strain 536 / UPEC)</name>
    <dbReference type="NCBI Taxonomy" id="362663"/>
    <lineage>
        <taxon>Bacteria</taxon>
        <taxon>Pseudomonadati</taxon>
        <taxon>Pseudomonadota</taxon>
        <taxon>Gammaproteobacteria</taxon>
        <taxon>Enterobacterales</taxon>
        <taxon>Enterobacteriaceae</taxon>
        <taxon>Escherichia</taxon>
    </lineage>
</organism>
<feature type="chain" id="PRO_0000274121" description="Nickel import ATP-binding protein NikE">
    <location>
        <begin position="1"/>
        <end position="268"/>
    </location>
</feature>
<feature type="domain" description="ABC transporter" evidence="1">
    <location>
        <begin position="4"/>
        <end position="252"/>
    </location>
</feature>
<feature type="binding site" evidence="1">
    <location>
        <begin position="45"/>
        <end position="52"/>
    </location>
    <ligand>
        <name>ATP</name>
        <dbReference type="ChEBI" id="CHEBI:30616"/>
    </ligand>
</feature>
<protein>
    <recommendedName>
        <fullName evidence="1">Nickel import ATP-binding protein NikE</fullName>
        <ecNumber evidence="1">7.2.2.11</ecNumber>
    </recommendedName>
</protein>
<comment type="function">
    <text evidence="1">Part of the ABC transporter complex NikABCDE involved in nickel import. Responsible for energy coupling to the transport system.</text>
</comment>
<comment type="catalytic activity">
    <reaction evidence="1">
        <text>Ni(2+)(out) + ATP + H2O = Ni(2+)(in) + ADP + phosphate + H(+)</text>
        <dbReference type="Rhea" id="RHEA:15557"/>
        <dbReference type="ChEBI" id="CHEBI:15377"/>
        <dbReference type="ChEBI" id="CHEBI:15378"/>
        <dbReference type="ChEBI" id="CHEBI:30616"/>
        <dbReference type="ChEBI" id="CHEBI:43474"/>
        <dbReference type="ChEBI" id="CHEBI:49786"/>
        <dbReference type="ChEBI" id="CHEBI:456216"/>
        <dbReference type="EC" id="7.2.2.11"/>
    </reaction>
</comment>
<comment type="subunit">
    <text evidence="1">The complex is composed of two ATP-binding proteins (NikD and NikE), two transmembrane proteins (NikB and NikC) and a solute-binding protein (NikA).</text>
</comment>
<comment type="subcellular location">
    <subcellularLocation>
        <location evidence="1">Cell inner membrane</location>
        <topology evidence="1">Peripheral membrane protein</topology>
    </subcellularLocation>
</comment>
<comment type="similarity">
    <text evidence="1">Belongs to the ABC transporter superfamily. Nickel importer (TC 3.A.1.5.3) family.</text>
</comment>
<proteinExistence type="inferred from homology"/>
<evidence type="ECO:0000255" key="1">
    <source>
        <dbReference type="HAMAP-Rule" id="MF_01712"/>
    </source>
</evidence>
<accession>Q0TBX8</accession>
<name>NIKE_ECOL5</name>
<sequence length="268" mass="29695">MTLLNVSDLSHHYAHGGFSGKHQHQAVLNNVSLALKSGETVALLGRSGCGKSTLARLLVGLESPSQGNISWRGEPLAKLNRAQRKAFRRDIQMVFQDSISAVNPRKTVREILREPMRHLLSLKKAEQLARASEMLKAVDLDDSVLDKRPPQLSGGQLQRVCLARALAVEPKLLILDEAVSNLDLVLQAGVIRLLKKLQQQFGTACLFITHDLRLVERFCQRVMVMDNGQIVETQVVGDKLTFSSDAGRVLQNAVLPAFPVRRRTTEKV</sequence>